<comment type="function">
    <text evidence="1">Catalyzes the base-exchange of a guanine (G) residue with the queuine precursor 7-aminomethyl-7-deazaguanine (PreQ1) at position 34 (anticodon wobble position) in tRNAs with GU(N) anticodons (tRNA-Asp, -Asn, -His and -Tyr). Catalysis occurs through a double-displacement mechanism. The nucleophile active site attacks the C1' of nucleotide 34 to detach the guanine base from the RNA, forming a covalent enzyme-RNA intermediate. The proton acceptor active site deprotonates the incoming PreQ1, allowing a nucleophilic attack on the C1' of the ribose to form the product. After dissociation, two additional enzymatic reactions on the tRNA convert PreQ1 to queuine (Q), resulting in the hypermodified nucleoside queuosine (7-(((4,5-cis-dihydroxy-2-cyclopenten-1-yl)amino)methyl)-7-deazaguanosine).</text>
</comment>
<comment type="catalytic activity">
    <reaction evidence="1">
        <text>7-aminomethyl-7-carbaguanine + guanosine(34) in tRNA = 7-aminomethyl-7-carbaguanosine(34) in tRNA + guanine</text>
        <dbReference type="Rhea" id="RHEA:24104"/>
        <dbReference type="Rhea" id="RHEA-COMP:10341"/>
        <dbReference type="Rhea" id="RHEA-COMP:10342"/>
        <dbReference type="ChEBI" id="CHEBI:16235"/>
        <dbReference type="ChEBI" id="CHEBI:58703"/>
        <dbReference type="ChEBI" id="CHEBI:74269"/>
        <dbReference type="ChEBI" id="CHEBI:82833"/>
        <dbReference type="EC" id="2.4.2.29"/>
    </reaction>
</comment>
<comment type="cofactor">
    <cofactor evidence="1">
        <name>Zn(2+)</name>
        <dbReference type="ChEBI" id="CHEBI:29105"/>
    </cofactor>
    <text evidence="1">Binds 1 zinc ion per subunit.</text>
</comment>
<comment type="pathway">
    <text evidence="1">tRNA modification; tRNA-queuosine biosynthesis.</text>
</comment>
<comment type="subunit">
    <text evidence="1">Homodimer. Within each dimer, one monomer is responsible for RNA recognition and catalysis, while the other monomer binds to the replacement base PreQ1.</text>
</comment>
<comment type="similarity">
    <text evidence="1">Belongs to the queuine tRNA-ribosyltransferase family.</text>
</comment>
<feature type="chain" id="PRO_1000016813" description="Queuine tRNA-ribosyltransferase">
    <location>
        <begin position="1"/>
        <end position="379"/>
    </location>
</feature>
<feature type="region of interest" description="RNA binding" evidence="1">
    <location>
        <begin position="249"/>
        <end position="255"/>
    </location>
</feature>
<feature type="region of interest" description="RNA binding; important for wobble base 34 recognition" evidence="1">
    <location>
        <begin position="273"/>
        <end position="277"/>
    </location>
</feature>
<feature type="active site" description="Proton acceptor" evidence="1">
    <location>
        <position position="94"/>
    </location>
</feature>
<feature type="active site" description="Nucleophile" evidence="1">
    <location>
        <position position="268"/>
    </location>
</feature>
<feature type="binding site" evidence="1">
    <location>
        <begin position="94"/>
        <end position="98"/>
    </location>
    <ligand>
        <name>substrate</name>
    </ligand>
</feature>
<feature type="binding site" evidence="1">
    <location>
        <position position="148"/>
    </location>
    <ligand>
        <name>substrate</name>
    </ligand>
</feature>
<feature type="binding site" evidence="1">
    <location>
        <position position="191"/>
    </location>
    <ligand>
        <name>substrate</name>
    </ligand>
</feature>
<feature type="binding site" evidence="1">
    <location>
        <position position="218"/>
    </location>
    <ligand>
        <name>substrate</name>
    </ligand>
</feature>
<feature type="binding site" evidence="1">
    <location>
        <position position="306"/>
    </location>
    <ligand>
        <name>Zn(2+)</name>
        <dbReference type="ChEBI" id="CHEBI:29105"/>
    </ligand>
</feature>
<feature type="binding site" evidence="1">
    <location>
        <position position="308"/>
    </location>
    <ligand>
        <name>Zn(2+)</name>
        <dbReference type="ChEBI" id="CHEBI:29105"/>
    </ligand>
</feature>
<feature type="binding site" evidence="1">
    <location>
        <position position="311"/>
    </location>
    <ligand>
        <name>Zn(2+)</name>
        <dbReference type="ChEBI" id="CHEBI:29105"/>
    </ligand>
</feature>
<feature type="binding site" evidence="1">
    <location>
        <position position="337"/>
    </location>
    <ligand>
        <name>Zn(2+)</name>
        <dbReference type="ChEBI" id="CHEBI:29105"/>
    </ligand>
</feature>
<dbReference type="EC" id="2.4.2.29" evidence="1"/>
<dbReference type="EMBL" id="AM263198">
    <property type="protein sequence ID" value="CAK20961.1"/>
    <property type="molecule type" value="Genomic_DNA"/>
</dbReference>
<dbReference type="RefSeq" id="WP_011702332.1">
    <property type="nucleotide sequence ID" value="NC_008555.1"/>
</dbReference>
<dbReference type="SMR" id="A0AIX9"/>
<dbReference type="STRING" id="386043.lwe1543"/>
<dbReference type="GeneID" id="61189420"/>
<dbReference type="KEGG" id="lwe:lwe1543"/>
<dbReference type="eggNOG" id="COG0343">
    <property type="taxonomic scope" value="Bacteria"/>
</dbReference>
<dbReference type="HOGENOM" id="CLU_022060_0_1_9"/>
<dbReference type="OrthoDB" id="9805417at2"/>
<dbReference type="UniPathway" id="UPA00392"/>
<dbReference type="Proteomes" id="UP000000779">
    <property type="component" value="Chromosome"/>
</dbReference>
<dbReference type="GO" id="GO:0005829">
    <property type="term" value="C:cytosol"/>
    <property type="evidence" value="ECO:0007669"/>
    <property type="project" value="TreeGrafter"/>
</dbReference>
<dbReference type="GO" id="GO:0046872">
    <property type="term" value="F:metal ion binding"/>
    <property type="evidence" value="ECO:0007669"/>
    <property type="project" value="UniProtKB-KW"/>
</dbReference>
<dbReference type="GO" id="GO:0008479">
    <property type="term" value="F:tRNA-guanosine(34) queuine transglycosylase activity"/>
    <property type="evidence" value="ECO:0007669"/>
    <property type="project" value="UniProtKB-UniRule"/>
</dbReference>
<dbReference type="GO" id="GO:0008616">
    <property type="term" value="P:queuosine biosynthetic process"/>
    <property type="evidence" value="ECO:0007669"/>
    <property type="project" value="UniProtKB-UniRule"/>
</dbReference>
<dbReference type="GO" id="GO:0002099">
    <property type="term" value="P:tRNA wobble guanine modification"/>
    <property type="evidence" value="ECO:0007669"/>
    <property type="project" value="TreeGrafter"/>
</dbReference>
<dbReference type="GO" id="GO:0101030">
    <property type="term" value="P:tRNA-guanine transglycosylation"/>
    <property type="evidence" value="ECO:0007669"/>
    <property type="project" value="InterPro"/>
</dbReference>
<dbReference type="FunFam" id="3.20.20.105:FF:000001">
    <property type="entry name" value="Queuine tRNA-ribosyltransferase"/>
    <property type="match status" value="1"/>
</dbReference>
<dbReference type="Gene3D" id="3.20.20.105">
    <property type="entry name" value="Queuine tRNA-ribosyltransferase-like"/>
    <property type="match status" value="1"/>
</dbReference>
<dbReference type="HAMAP" id="MF_00168">
    <property type="entry name" value="Q_tRNA_Tgt"/>
    <property type="match status" value="1"/>
</dbReference>
<dbReference type="InterPro" id="IPR050076">
    <property type="entry name" value="ArchSynthase1/Queuine_TRR"/>
</dbReference>
<dbReference type="InterPro" id="IPR004803">
    <property type="entry name" value="TGT"/>
</dbReference>
<dbReference type="InterPro" id="IPR036511">
    <property type="entry name" value="TGT-like_sf"/>
</dbReference>
<dbReference type="InterPro" id="IPR002616">
    <property type="entry name" value="tRNA_ribo_trans-like"/>
</dbReference>
<dbReference type="NCBIfam" id="TIGR00430">
    <property type="entry name" value="Q_tRNA_tgt"/>
    <property type="match status" value="1"/>
</dbReference>
<dbReference type="NCBIfam" id="TIGR00449">
    <property type="entry name" value="tgt_general"/>
    <property type="match status" value="1"/>
</dbReference>
<dbReference type="PANTHER" id="PTHR46499">
    <property type="entry name" value="QUEUINE TRNA-RIBOSYLTRANSFERASE"/>
    <property type="match status" value="1"/>
</dbReference>
<dbReference type="PANTHER" id="PTHR46499:SF1">
    <property type="entry name" value="QUEUINE TRNA-RIBOSYLTRANSFERASE"/>
    <property type="match status" value="1"/>
</dbReference>
<dbReference type="Pfam" id="PF01702">
    <property type="entry name" value="TGT"/>
    <property type="match status" value="1"/>
</dbReference>
<dbReference type="SUPFAM" id="SSF51713">
    <property type="entry name" value="tRNA-guanine transglycosylase"/>
    <property type="match status" value="1"/>
</dbReference>
<protein>
    <recommendedName>
        <fullName evidence="1">Queuine tRNA-ribosyltransferase</fullName>
        <ecNumber evidence="1">2.4.2.29</ecNumber>
    </recommendedName>
    <alternativeName>
        <fullName evidence="1">Guanine insertion enzyme</fullName>
    </alternativeName>
    <alternativeName>
        <fullName evidence="1">tRNA-guanine transglycosylase</fullName>
    </alternativeName>
</protein>
<evidence type="ECO:0000255" key="1">
    <source>
        <dbReference type="HAMAP-Rule" id="MF_00168"/>
    </source>
</evidence>
<reference key="1">
    <citation type="journal article" date="2006" name="J. Bacteriol.">
        <title>Whole-genome sequence of Listeria welshimeri reveals common steps in genome reduction with Listeria innocua as compared to Listeria monocytogenes.</title>
        <authorList>
            <person name="Hain T."/>
            <person name="Steinweg C."/>
            <person name="Kuenne C.T."/>
            <person name="Billion A."/>
            <person name="Ghai R."/>
            <person name="Chatterjee S.S."/>
            <person name="Domann E."/>
            <person name="Kaerst U."/>
            <person name="Goesmann A."/>
            <person name="Bekel T."/>
            <person name="Bartels D."/>
            <person name="Kaiser O."/>
            <person name="Meyer F."/>
            <person name="Puehler A."/>
            <person name="Weisshaar B."/>
            <person name="Wehland J."/>
            <person name="Liang C."/>
            <person name="Dandekar T."/>
            <person name="Lampidis R."/>
            <person name="Kreft J."/>
            <person name="Goebel W."/>
            <person name="Chakraborty T."/>
        </authorList>
    </citation>
    <scope>NUCLEOTIDE SEQUENCE [LARGE SCALE GENOMIC DNA]</scope>
    <source>
        <strain>ATCC 35897 / DSM 20650 / CCUG 15529 / CIP 8149 / NCTC 11857 / SLCC 5334 / V8</strain>
    </source>
</reference>
<sequence>MSAIRYELIKTDKQTGARLGKIHTPHGTFDTPMFMPVGTLATVKTMSPEELKAMGAGIILSNTYHLWLRPGEELIREAGGLHKFMNWDQPILTDSGGFQVFSLSKMRDIKEEGVHFRNHLNGDKLFLSPEKAIQIQNALGSDIMMSFDECPPYPASHEYMKKSVERTSRWAERGLQAHARPEDQGLFGIVQGGAYEDLRAQSAKDLVSLDFPGYSIGGLSVGEPKDVMNRVLEHTTPLLPANKPRYLMGVGSPDSLIDGVIRGVDMFDCVLPTRIARNGTCMTSSGRLVIKNAKFTHDFRPIDENCDCYTCKNYSRAYIRHLIRCEETFGIRLTTYHNLHFLLNLMKQVRSAIMEDRLADFREEFFEQYGFNRPDAKNF</sequence>
<accession>A0AIX9</accession>
<proteinExistence type="inferred from homology"/>
<keyword id="KW-0328">Glycosyltransferase</keyword>
<keyword id="KW-0479">Metal-binding</keyword>
<keyword id="KW-0671">Queuosine biosynthesis</keyword>
<keyword id="KW-0808">Transferase</keyword>
<keyword id="KW-0819">tRNA processing</keyword>
<keyword id="KW-0862">Zinc</keyword>
<gene>
    <name evidence="1" type="primary">tgt</name>
    <name type="ordered locus">lwe1543</name>
</gene>
<organism>
    <name type="scientific">Listeria welshimeri serovar 6b (strain ATCC 35897 / DSM 20650 / CCUG 15529 / CIP 8149 / NCTC 11857 / SLCC 5334 / V8)</name>
    <dbReference type="NCBI Taxonomy" id="386043"/>
    <lineage>
        <taxon>Bacteria</taxon>
        <taxon>Bacillati</taxon>
        <taxon>Bacillota</taxon>
        <taxon>Bacilli</taxon>
        <taxon>Bacillales</taxon>
        <taxon>Listeriaceae</taxon>
        <taxon>Listeria</taxon>
    </lineage>
</organism>
<name>TGT_LISW6</name>